<organism>
    <name type="scientific">Lactobacillus helveticus (strain DPC 4571)</name>
    <dbReference type="NCBI Taxonomy" id="405566"/>
    <lineage>
        <taxon>Bacteria</taxon>
        <taxon>Bacillati</taxon>
        <taxon>Bacillota</taxon>
        <taxon>Bacilli</taxon>
        <taxon>Lactobacillales</taxon>
        <taxon>Lactobacillaceae</taxon>
        <taxon>Lactobacillus</taxon>
    </lineage>
</organism>
<keyword id="KW-0240">DNA-directed RNA polymerase</keyword>
<keyword id="KW-0548">Nucleotidyltransferase</keyword>
<keyword id="KW-0804">Transcription</keyword>
<keyword id="KW-0808">Transferase</keyword>
<proteinExistence type="inferred from homology"/>
<feature type="chain" id="PRO_0000323639" description="DNA-directed RNA polymerase subunit alpha">
    <location>
        <begin position="1"/>
        <end position="312"/>
    </location>
</feature>
<feature type="region of interest" description="Alpha N-terminal domain (alpha-NTD)" evidence="1">
    <location>
        <begin position="1"/>
        <end position="225"/>
    </location>
</feature>
<feature type="region of interest" description="Alpha C-terminal domain (alpha-CTD)" evidence="1">
    <location>
        <begin position="243"/>
        <end position="312"/>
    </location>
</feature>
<reference key="1">
    <citation type="journal article" date="2008" name="J. Bacteriol.">
        <title>Genome sequence of Lactobacillus helveticus: an organism distinguished by selective gene loss and IS element expansion.</title>
        <authorList>
            <person name="Callanan M."/>
            <person name="Kaleta P."/>
            <person name="O'Callaghan J."/>
            <person name="O'Sullivan O."/>
            <person name="Jordan K."/>
            <person name="McAuliffe O."/>
            <person name="Sangrador-Vegas A."/>
            <person name="Slattery L."/>
            <person name="Fitzgerald G.F."/>
            <person name="Beresford T."/>
            <person name="Ross R.P."/>
        </authorList>
    </citation>
    <scope>NUCLEOTIDE SEQUENCE [LARGE SCALE GENOMIC DNA]</scope>
    <source>
        <strain>DPC 4571</strain>
    </source>
</reference>
<protein>
    <recommendedName>
        <fullName evidence="1">DNA-directed RNA polymerase subunit alpha</fullName>
        <shortName evidence="1">RNAP subunit alpha</shortName>
        <ecNumber evidence="1">2.7.7.6</ecNumber>
    </recommendedName>
    <alternativeName>
        <fullName evidence="1">RNA polymerase subunit alpha</fullName>
    </alternativeName>
    <alternativeName>
        <fullName evidence="1">Transcriptase subunit alpha</fullName>
    </alternativeName>
</protein>
<dbReference type="EC" id="2.7.7.6" evidence="1"/>
<dbReference type="EMBL" id="CP000517">
    <property type="protein sequence ID" value="ABX26561.1"/>
    <property type="molecule type" value="Genomic_DNA"/>
</dbReference>
<dbReference type="RefSeq" id="WP_012211387.1">
    <property type="nucleotide sequence ID" value="NC_010080.1"/>
</dbReference>
<dbReference type="SMR" id="A8YXN0"/>
<dbReference type="KEGG" id="lhe:lhv_0337"/>
<dbReference type="eggNOG" id="COG0202">
    <property type="taxonomic scope" value="Bacteria"/>
</dbReference>
<dbReference type="HOGENOM" id="CLU_053084_0_1_9"/>
<dbReference type="Proteomes" id="UP000000790">
    <property type="component" value="Chromosome"/>
</dbReference>
<dbReference type="GO" id="GO:0005737">
    <property type="term" value="C:cytoplasm"/>
    <property type="evidence" value="ECO:0007669"/>
    <property type="project" value="UniProtKB-ARBA"/>
</dbReference>
<dbReference type="GO" id="GO:0000428">
    <property type="term" value="C:DNA-directed RNA polymerase complex"/>
    <property type="evidence" value="ECO:0007669"/>
    <property type="project" value="UniProtKB-KW"/>
</dbReference>
<dbReference type="GO" id="GO:0003677">
    <property type="term" value="F:DNA binding"/>
    <property type="evidence" value="ECO:0007669"/>
    <property type="project" value="UniProtKB-UniRule"/>
</dbReference>
<dbReference type="GO" id="GO:0003899">
    <property type="term" value="F:DNA-directed RNA polymerase activity"/>
    <property type="evidence" value="ECO:0007669"/>
    <property type="project" value="UniProtKB-UniRule"/>
</dbReference>
<dbReference type="GO" id="GO:0046983">
    <property type="term" value="F:protein dimerization activity"/>
    <property type="evidence" value="ECO:0007669"/>
    <property type="project" value="InterPro"/>
</dbReference>
<dbReference type="GO" id="GO:0006351">
    <property type="term" value="P:DNA-templated transcription"/>
    <property type="evidence" value="ECO:0007669"/>
    <property type="project" value="UniProtKB-UniRule"/>
</dbReference>
<dbReference type="CDD" id="cd06928">
    <property type="entry name" value="RNAP_alpha_NTD"/>
    <property type="match status" value="1"/>
</dbReference>
<dbReference type="FunFam" id="1.10.150.20:FF:000001">
    <property type="entry name" value="DNA-directed RNA polymerase subunit alpha"/>
    <property type="match status" value="1"/>
</dbReference>
<dbReference type="FunFam" id="2.170.120.12:FF:000001">
    <property type="entry name" value="DNA-directed RNA polymerase subunit alpha"/>
    <property type="match status" value="1"/>
</dbReference>
<dbReference type="Gene3D" id="1.10.150.20">
    <property type="entry name" value="5' to 3' exonuclease, C-terminal subdomain"/>
    <property type="match status" value="1"/>
</dbReference>
<dbReference type="Gene3D" id="2.170.120.12">
    <property type="entry name" value="DNA-directed RNA polymerase, insert domain"/>
    <property type="match status" value="1"/>
</dbReference>
<dbReference type="Gene3D" id="3.30.1360.10">
    <property type="entry name" value="RNA polymerase, RBP11-like subunit"/>
    <property type="match status" value="1"/>
</dbReference>
<dbReference type="HAMAP" id="MF_00059">
    <property type="entry name" value="RNApol_bact_RpoA"/>
    <property type="match status" value="1"/>
</dbReference>
<dbReference type="InterPro" id="IPR011262">
    <property type="entry name" value="DNA-dir_RNA_pol_insert"/>
</dbReference>
<dbReference type="InterPro" id="IPR011263">
    <property type="entry name" value="DNA-dir_RNA_pol_RpoA/D/Rpb3"/>
</dbReference>
<dbReference type="InterPro" id="IPR011773">
    <property type="entry name" value="DNA-dir_RpoA"/>
</dbReference>
<dbReference type="InterPro" id="IPR036603">
    <property type="entry name" value="RBP11-like"/>
</dbReference>
<dbReference type="InterPro" id="IPR011260">
    <property type="entry name" value="RNAP_asu_C"/>
</dbReference>
<dbReference type="InterPro" id="IPR036643">
    <property type="entry name" value="RNApol_insert_sf"/>
</dbReference>
<dbReference type="NCBIfam" id="NF003513">
    <property type="entry name" value="PRK05182.1-2"/>
    <property type="match status" value="1"/>
</dbReference>
<dbReference type="NCBIfam" id="NF003515">
    <property type="entry name" value="PRK05182.2-1"/>
    <property type="match status" value="1"/>
</dbReference>
<dbReference type="NCBIfam" id="NF003516">
    <property type="entry name" value="PRK05182.2-2"/>
    <property type="match status" value="1"/>
</dbReference>
<dbReference type="NCBIfam" id="NF003519">
    <property type="entry name" value="PRK05182.2-5"/>
    <property type="match status" value="1"/>
</dbReference>
<dbReference type="NCBIfam" id="TIGR02027">
    <property type="entry name" value="rpoA"/>
    <property type="match status" value="1"/>
</dbReference>
<dbReference type="Pfam" id="PF01000">
    <property type="entry name" value="RNA_pol_A_bac"/>
    <property type="match status" value="1"/>
</dbReference>
<dbReference type="Pfam" id="PF03118">
    <property type="entry name" value="RNA_pol_A_CTD"/>
    <property type="match status" value="1"/>
</dbReference>
<dbReference type="Pfam" id="PF01193">
    <property type="entry name" value="RNA_pol_L"/>
    <property type="match status" value="1"/>
</dbReference>
<dbReference type="SMART" id="SM00662">
    <property type="entry name" value="RPOLD"/>
    <property type="match status" value="1"/>
</dbReference>
<dbReference type="SUPFAM" id="SSF47789">
    <property type="entry name" value="C-terminal domain of RNA polymerase alpha subunit"/>
    <property type="match status" value="1"/>
</dbReference>
<dbReference type="SUPFAM" id="SSF56553">
    <property type="entry name" value="Insert subdomain of RNA polymerase alpha subunit"/>
    <property type="match status" value="1"/>
</dbReference>
<dbReference type="SUPFAM" id="SSF55257">
    <property type="entry name" value="RBP11-like subunits of RNA polymerase"/>
    <property type="match status" value="1"/>
</dbReference>
<comment type="function">
    <text evidence="1">DNA-dependent RNA polymerase catalyzes the transcription of DNA into RNA using the four ribonucleoside triphosphates as substrates.</text>
</comment>
<comment type="catalytic activity">
    <reaction evidence="1">
        <text>RNA(n) + a ribonucleoside 5'-triphosphate = RNA(n+1) + diphosphate</text>
        <dbReference type="Rhea" id="RHEA:21248"/>
        <dbReference type="Rhea" id="RHEA-COMP:14527"/>
        <dbReference type="Rhea" id="RHEA-COMP:17342"/>
        <dbReference type="ChEBI" id="CHEBI:33019"/>
        <dbReference type="ChEBI" id="CHEBI:61557"/>
        <dbReference type="ChEBI" id="CHEBI:140395"/>
        <dbReference type="EC" id="2.7.7.6"/>
    </reaction>
</comment>
<comment type="subunit">
    <text evidence="1">Homodimer. The RNAP catalytic core consists of 2 alpha, 1 beta, 1 beta' and 1 omega subunit. When a sigma factor is associated with the core the holoenzyme is formed, which can initiate transcription.</text>
</comment>
<comment type="domain">
    <text evidence="1">The N-terminal domain is essential for RNAP assembly and basal transcription, whereas the C-terminal domain is involved in interaction with transcriptional regulators and with upstream promoter elements.</text>
</comment>
<comment type="similarity">
    <text evidence="1">Belongs to the RNA polymerase alpha chain family.</text>
</comment>
<name>RPOA_LACH4</name>
<evidence type="ECO:0000255" key="1">
    <source>
        <dbReference type="HAMAP-Rule" id="MF_00059"/>
    </source>
</evidence>
<sequence length="312" mass="34989">MIEFEKPNITVVEQEDSYGKFVVEPLERGFGTTLGNSLRRVLLTSIPGTGLVYVQIDGVLHEFSTVPGVREDVTKIILNLKKLELKSLSDERKVIELDVEGPATVTADDLKVDADVQVLNPDQYICTIAEGGHLHMEIAVQNGRGYVAASDNKSDDMPIGVIPVDSLFSPIKKVNYQVESTRVGKRDDFDKLTFEIWTDGSIKPNDALSFAAKILVEHFKVFESADADTKFSEVMVEKEDDKKEKKLEMTIEELDLSVRSYNCLKRAGINTLQELTDMTESDMMRVRNLGRKSLEEVKNKLTDLGLSLRQED</sequence>
<accession>A8YXN0</accession>
<gene>
    <name evidence="1" type="primary">rpoA</name>
    <name type="ordered locus">lhv_0337</name>
</gene>